<sequence length="315" mass="35177">MSEEKKQWSISDIEAIYQQPFNDLLYQAHTIHRTYHDPNSLQFATLLSIKTGACPEDCGYCSQSGHYKTHVEKEKLMSVEEVLQCAKEAKEGGAKRFCMGAAWRCPPDKAIPQLKEMIEGVKSLGLETCMTLGMLTKEQASHLKEAGLDYYNHNIDTSPSYYDKVVTTRKFSDRLDTLNNVRSAGINVCCGGILGLGETREDRIEFLLTLANMETPPESVPINRLIPVEGTPLAQAERVEGIELVRTIATARILMPKSAIRLTAGRTEMSDELQALCYFAGANSVFIGDKLLTEDNPQRFKDKTLFNKLGLTEMV</sequence>
<keyword id="KW-0001">2Fe-2S</keyword>
<keyword id="KW-0004">4Fe-4S</keyword>
<keyword id="KW-0093">Biotin biosynthesis</keyword>
<keyword id="KW-0408">Iron</keyword>
<keyword id="KW-0411">Iron-sulfur</keyword>
<keyword id="KW-0479">Metal-binding</keyword>
<keyword id="KW-0949">S-adenosyl-L-methionine</keyword>
<keyword id="KW-0808">Transferase</keyword>
<gene>
    <name evidence="1" type="primary">bioB</name>
    <name type="ordered locus">lpp1428</name>
</gene>
<protein>
    <recommendedName>
        <fullName evidence="1">Biotin synthase</fullName>
        <ecNumber evidence="1">2.8.1.6</ecNumber>
    </recommendedName>
</protein>
<dbReference type="EC" id="2.8.1.6" evidence="1"/>
<dbReference type="EMBL" id="CR628336">
    <property type="protein sequence ID" value="CAH12579.1"/>
    <property type="molecule type" value="Genomic_DNA"/>
</dbReference>
<dbReference type="RefSeq" id="WP_010947201.1">
    <property type="nucleotide sequence ID" value="NC_006368.1"/>
</dbReference>
<dbReference type="SMR" id="Q5X592"/>
<dbReference type="GeneID" id="57035462"/>
<dbReference type="KEGG" id="lpp:lpp1428"/>
<dbReference type="LegioList" id="lpp1428"/>
<dbReference type="HOGENOM" id="CLU_033172_1_2_6"/>
<dbReference type="UniPathway" id="UPA00078">
    <property type="reaction ID" value="UER00162"/>
</dbReference>
<dbReference type="GO" id="GO:0051537">
    <property type="term" value="F:2 iron, 2 sulfur cluster binding"/>
    <property type="evidence" value="ECO:0007669"/>
    <property type="project" value="UniProtKB-KW"/>
</dbReference>
<dbReference type="GO" id="GO:0051539">
    <property type="term" value="F:4 iron, 4 sulfur cluster binding"/>
    <property type="evidence" value="ECO:0007669"/>
    <property type="project" value="UniProtKB-KW"/>
</dbReference>
<dbReference type="GO" id="GO:0004076">
    <property type="term" value="F:biotin synthase activity"/>
    <property type="evidence" value="ECO:0007669"/>
    <property type="project" value="UniProtKB-UniRule"/>
</dbReference>
<dbReference type="GO" id="GO:0005506">
    <property type="term" value="F:iron ion binding"/>
    <property type="evidence" value="ECO:0007669"/>
    <property type="project" value="UniProtKB-UniRule"/>
</dbReference>
<dbReference type="GO" id="GO:0009102">
    <property type="term" value="P:biotin biosynthetic process"/>
    <property type="evidence" value="ECO:0007669"/>
    <property type="project" value="UniProtKB-UniRule"/>
</dbReference>
<dbReference type="CDD" id="cd01335">
    <property type="entry name" value="Radical_SAM"/>
    <property type="match status" value="1"/>
</dbReference>
<dbReference type="FunFam" id="3.20.20.70:FF:000011">
    <property type="entry name" value="Biotin synthase"/>
    <property type="match status" value="1"/>
</dbReference>
<dbReference type="Gene3D" id="3.20.20.70">
    <property type="entry name" value="Aldolase class I"/>
    <property type="match status" value="1"/>
</dbReference>
<dbReference type="HAMAP" id="MF_01694">
    <property type="entry name" value="BioB"/>
    <property type="match status" value="1"/>
</dbReference>
<dbReference type="InterPro" id="IPR013785">
    <property type="entry name" value="Aldolase_TIM"/>
</dbReference>
<dbReference type="InterPro" id="IPR010722">
    <property type="entry name" value="BATS_dom"/>
</dbReference>
<dbReference type="InterPro" id="IPR002684">
    <property type="entry name" value="Biotin_synth/BioAB"/>
</dbReference>
<dbReference type="InterPro" id="IPR024177">
    <property type="entry name" value="Biotin_synthase"/>
</dbReference>
<dbReference type="InterPro" id="IPR006638">
    <property type="entry name" value="Elp3/MiaA/NifB-like_rSAM"/>
</dbReference>
<dbReference type="InterPro" id="IPR007197">
    <property type="entry name" value="rSAM"/>
</dbReference>
<dbReference type="NCBIfam" id="TIGR00433">
    <property type="entry name" value="bioB"/>
    <property type="match status" value="1"/>
</dbReference>
<dbReference type="PANTHER" id="PTHR22976">
    <property type="entry name" value="BIOTIN SYNTHASE"/>
    <property type="match status" value="1"/>
</dbReference>
<dbReference type="PANTHER" id="PTHR22976:SF2">
    <property type="entry name" value="BIOTIN SYNTHASE, MITOCHONDRIAL"/>
    <property type="match status" value="1"/>
</dbReference>
<dbReference type="Pfam" id="PF06968">
    <property type="entry name" value="BATS"/>
    <property type="match status" value="1"/>
</dbReference>
<dbReference type="Pfam" id="PF04055">
    <property type="entry name" value="Radical_SAM"/>
    <property type="match status" value="1"/>
</dbReference>
<dbReference type="PIRSF" id="PIRSF001619">
    <property type="entry name" value="Biotin_synth"/>
    <property type="match status" value="1"/>
</dbReference>
<dbReference type="SFLD" id="SFLDF00272">
    <property type="entry name" value="biotin_synthase"/>
    <property type="match status" value="1"/>
</dbReference>
<dbReference type="SFLD" id="SFLDG01278">
    <property type="entry name" value="biotin_synthase_like"/>
    <property type="match status" value="1"/>
</dbReference>
<dbReference type="SMART" id="SM00876">
    <property type="entry name" value="BATS"/>
    <property type="match status" value="1"/>
</dbReference>
<dbReference type="SMART" id="SM00729">
    <property type="entry name" value="Elp3"/>
    <property type="match status" value="1"/>
</dbReference>
<dbReference type="SUPFAM" id="SSF102114">
    <property type="entry name" value="Radical SAM enzymes"/>
    <property type="match status" value="1"/>
</dbReference>
<dbReference type="PROSITE" id="PS51918">
    <property type="entry name" value="RADICAL_SAM"/>
    <property type="match status" value="1"/>
</dbReference>
<evidence type="ECO:0000255" key="1">
    <source>
        <dbReference type="HAMAP-Rule" id="MF_01694"/>
    </source>
</evidence>
<evidence type="ECO:0000255" key="2">
    <source>
        <dbReference type="PROSITE-ProRule" id="PRU01266"/>
    </source>
</evidence>
<comment type="function">
    <text evidence="1">Catalyzes the conversion of dethiobiotin (DTB) to biotin by the insertion of a sulfur atom into dethiobiotin via a radical-based mechanism.</text>
</comment>
<comment type="catalytic activity">
    <reaction evidence="1">
        <text>(4R,5S)-dethiobiotin + (sulfur carrier)-SH + 2 reduced [2Fe-2S]-[ferredoxin] + 2 S-adenosyl-L-methionine = (sulfur carrier)-H + biotin + 2 5'-deoxyadenosine + 2 L-methionine + 2 oxidized [2Fe-2S]-[ferredoxin]</text>
        <dbReference type="Rhea" id="RHEA:22060"/>
        <dbReference type="Rhea" id="RHEA-COMP:10000"/>
        <dbReference type="Rhea" id="RHEA-COMP:10001"/>
        <dbReference type="Rhea" id="RHEA-COMP:14737"/>
        <dbReference type="Rhea" id="RHEA-COMP:14739"/>
        <dbReference type="ChEBI" id="CHEBI:17319"/>
        <dbReference type="ChEBI" id="CHEBI:29917"/>
        <dbReference type="ChEBI" id="CHEBI:33737"/>
        <dbReference type="ChEBI" id="CHEBI:33738"/>
        <dbReference type="ChEBI" id="CHEBI:57586"/>
        <dbReference type="ChEBI" id="CHEBI:57844"/>
        <dbReference type="ChEBI" id="CHEBI:59789"/>
        <dbReference type="ChEBI" id="CHEBI:64428"/>
        <dbReference type="ChEBI" id="CHEBI:149473"/>
        <dbReference type="EC" id="2.8.1.6"/>
    </reaction>
</comment>
<comment type="cofactor">
    <cofactor evidence="1">
        <name>[4Fe-4S] cluster</name>
        <dbReference type="ChEBI" id="CHEBI:49883"/>
    </cofactor>
    <text evidence="1">Binds 1 [4Fe-4S] cluster. The cluster is coordinated with 3 cysteines and an exchangeable S-adenosyl-L-methionine.</text>
</comment>
<comment type="cofactor">
    <cofactor evidence="1">
        <name>[2Fe-2S] cluster</name>
        <dbReference type="ChEBI" id="CHEBI:190135"/>
    </cofactor>
    <text evidence="1">Binds 1 [2Fe-2S] cluster. The cluster is coordinated with 3 cysteines and 1 arginine.</text>
</comment>
<comment type="pathway">
    <text evidence="1">Cofactor biosynthesis; biotin biosynthesis; biotin from 7,8-diaminononanoate: step 2/2.</text>
</comment>
<comment type="subunit">
    <text evidence="1">Homodimer.</text>
</comment>
<comment type="similarity">
    <text evidence="1">Belongs to the radical SAM superfamily. Biotin synthase family.</text>
</comment>
<feature type="chain" id="PRO_0000381438" description="Biotin synthase">
    <location>
        <begin position="1"/>
        <end position="315"/>
    </location>
</feature>
<feature type="domain" description="Radical SAM core" evidence="2">
    <location>
        <begin position="39"/>
        <end position="266"/>
    </location>
</feature>
<feature type="binding site" evidence="1">
    <location>
        <position position="54"/>
    </location>
    <ligand>
        <name>[4Fe-4S] cluster</name>
        <dbReference type="ChEBI" id="CHEBI:49883"/>
        <note>4Fe-4S-S-AdoMet</note>
    </ligand>
</feature>
<feature type="binding site" evidence="1">
    <location>
        <position position="58"/>
    </location>
    <ligand>
        <name>[4Fe-4S] cluster</name>
        <dbReference type="ChEBI" id="CHEBI:49883"/>
        <note>4Fe-4S-S-AdoMet</note>
    </ligand>
</feature>
<feature type="binding site" evidence="1">
    <location>
        <position position="61"/>
    </location>
    <ligand>
        <name>[4Fe-4S] cluster</name>
        <dbReference type="ChEBI" id="CHEBI:49883"/>
        <note>4Fe-4S-S-AdoMet</note>
    </ligand>
</feature>
<feature type="binding site" evidence="1">
    <location>
        <position position="98"/>
    </location>
    <ligand>
        <name>[2Fe-2S] cluster</name>
        <dbReference type="ChEBI" id="CHEBI:190135"/>
    </ligand>
</feature>
<feature type="binding site" evidence="1">
    <location>
        <position position="129"/>
    </location>
    <ligand>
        <name>[2Fe-2S] cluster</name>
        <dbReference type="ChEBI" id="CHEBI:190135"/>
    </ligand>
</feature>
<feature type="binding site" evidence="1">
    <location>
        <position position="189"/>
    </location>
    <ligand>
        <name>[2Fe-2S] cluster</name>
        <dbReference type="ChEBI" id="CHEBI:190135"/>
    </ligand>
</feature>
<feature type="binding site" evidence="1">
    <location>
        <position position="261"/>
    </location>
    <ligand>
        <name>[2Fe-2S] cluster</name>
        <dbReference type="ChEBI" id="CHEBI:190135"/>
    </ligand>
</feature>
<accession>Q5X592</accession>
<organism>
    <name type="scientific">Legionella pneumophila (strain Paris)</name>
    <dbReference type="NCBI Taxonomy" id="297246"/>
    <lineage>
        <taxon>Bacteria</taxon>
        <taxon>Pseudomonadati</taxon>
        <taxon>Pseudomonadota</taxon>
        <taxon>Gammaproteobacteria</taxon>
        <taxon>Legionellales</taxon>
        <taxon>Legionellaceae</taxon>
        <taxon>Legionella</taxon>
    </lineage>
</organism>
<proteinExistence type="inferred from homology"/>
<reference key="1">
    <citation type="journal article" date="2004" name="Nat. Genet.">
        <title>Evidence in the Legionella pneumophila genome for exploitation of host cell functions and high genome plasticity.</title>
        <authorList>
            <person name="Cazalet C."/>
            <person name="Rusniok C."/>
            <person name="Brueggemann H."/>
            <person name="Zidane N."/>
            <person name="Magnier A."/>
            <person name="Ma L."/>
            <person name="Tichit M."/>
            <person name="Jarraud S."/>
            <person name="Bouchier C."/>
            <person name="Vandenesch F."/>
            <person name="Kunst F."/>
            <person name="Etienne J."/>
            <person name="Glaser P."/>
            <person name="Buchrieser C."/>
        </authorList>
    </citation>
    <scope>NUCLEOTIDE SEQUENCE [LARGE SCALE GENOMIC DNA]</scope>
    <source>
        <strain>Paris</strain>
    </source>
</reference>
<name>BIOB_LEGPA</name>